<proteinExistence type="evidence at transcript level"/>
<feature type="chain" id="PRO_0000328876" description="Transmembrane anterior posterior transformation protein 1 homolog">
    <location>
        <begin position="1"/>
        <end position="546"/>
    </location>
</feature>
<feature type="transmembrane region" description="Helical" evidence="4">
    <location>
        <begin position="92"/>
        <end position="112"/>
    </location>
</feature>
<feature type="transmembrane region" description="Helical" evidence="4">
    <location>
        <begin position="149"/>
        <end position="169"/>
    </location>
</feature>
<feature type="transmembrane region" description="Helical" evidence="4">
    <location>
        <begin position="219"/>
        <end position="239"/>
    </location>
</feature>
<feature type="transmembrane region" description="Helical" evidence="4">
    <location>
        <begin position="316"/>
        <end position="336"/>
    </location>
</feature>
<feature type="transmembrane region" description="Helical" evidence="4">
    <location>
        <begin position="384"/>
        <end position="404"/>
    </location>
</feature>
<feature type="transmembrane region" description="Helical" evidence="4">
    <location>
        <begin position="413"/>
        <end position="433"/>
    </location>
</feature>
<feature type="region of interest" description="Disordered" evidence="5">
    <location>
        <begin position="1"/>
        <end position="37"/>
    </location>
</feature>
<feature type="region of interest" description="Disordered" evidence="5">
    <location>
        <begin position="449"/>
        <end position="529"/>
    </location>
</feature>
<feature type="compositionally biased region" description="Polar residues" evidence="5">
    <location>
        <begin position="478"/>
        <end position="505"/>
    </location>
</feature>
<feature type="compositionally biased region" description="Basic and acidic residues" evidence="5">
    <location>
        <begin position="514"/>
        <end position="529"/>
    </location>
</feature>
<sequence>MADAAMSGEEKEEDGGKRTTAATPAETLGFYEPSDGSRVETKKRSLSDLSLLRFISAELTRGYFLENNEAKYKERREKVYTCLRIPRELEKLMVFGFFLCLDAFLYVFTLLPLRVLLALIRFLTLPCCGLSDGRVLQPAQVCDVLKGVILVICYFIMHYVDYSMMYHLIRGQSVIKLYIIYNMLEVADRLFSSFGQDILDALYWTATEPKERKRAHLGVIPHFFMAVLYVILHAILILVQATTLNVAFNSHNKSLLTIMMSNNFVEIKGSVFKKFEKNNLFQMSNSDIKERFTNYVLLLIVCLRNMEQFSWNPDHLWVLFPDVCMVIASEIAVDVVKHAFITKFNDITADVYSEYRASLAFELVSSRQKNACTDYSDSVSRRMGFIPLPLAVLLIRVVTSSVKVQGILAYSCVVLFYFGLITLKVLNSIVLLGKSCQYIKDANMEEKLFQPPTCQPGKTPKKAQNKSKPNQGHPPDETANTSVTSQPTKAASTAQLLVESNSDKLLTTPDAEEKDISGDNSELKQKQADKDLLDIDRFTICGNRID</sequence>
<protein>
    <recommendedName>
        <fullName>Transmembrane anterior posterior transformation protein 1 homolog</fullName>
    </recommendedName>
</protein>
<reference key="1">
    <citation type="submission" date="2005-02" db="EMBL/GenBank/DDBJ databases">
        <authorList>
            <consortium name="NIH - Xenopus Gene Collection (XGC) project"/>
        </authorList>
    </citation>
    <scope>NUCLEOTIDE SEQUENCE [LARGE SCALE MRNA]</scope>
    <source>
        <tissue>Egg</tissue>
    </source>
</reference>
<name>TAPT1_XENLA</name>
<dbReference type="EMBL" id="BC090195">
    <property type="protein sequence ID" value="AAH90195.1"/>
    <property type="molecule type" value="mRNA"/>
</dbReference>
<dbReference type="RefSeq" id="NP_001089274.1">
    <property type="nucleotide sequence ID" value="NM_001095805.1"/>
</dbReference>
<dbReference type="DNASU" id="734322"/>
<dbReference type="GeneID" id="734322"/>
<dbReference type="KEGG" id="xla:734322"/>
<dbReference type="AGR" id="Xenbase:XB-GENE-5742780"/>
<dbReference type="CTD" id="734322"/>
<dbReference type="OrthoDB" id="29023at2759"/>
<dbReference type="Proteomes" id="UP000186698">
    <property type="component" value="Chromosome 1S"/>
</dbReference>
<dbReference type="Bgee" id="734322">
    <property type="expression patterns" value="Expressed in muscle tissue and 19 other cell types or tissues"/>
</dbReference>
<dbReference type="GO" id="GO:0005813">
    <property type="term" value="C:centrosome"/>
    <property type="evidence" value="ECO:0000250"/>
    <property type="project" value="UniProtKB"/>
</dbReference>
<dbReference type="GO" id="GO:0036064">
    <property type="term" value="C:ciliary basal body"/>
    <property type="evidence" value="ECO:0000250"/>
    <property type="project" value="UniProtKB"/>
</dbReference>
<dbReference type="GO" id="GO:0005789">
    <property type="term" value="C:endoplasmic reticulum membrane"/>
    <property type="evidence" value="ECO:0000318"/>
    <property type="project" value="GO_Central"/>
</dbReference>
<dbReference type="GO" id="GO:0051216">
    <property type="term" value="P:cartilage development"/>
    <property type="evidence" value="ECO:0007669"/>
    <property type="project" value="UniProtKB-KW"/>
</dbReference>
<dbReference type="GO" id="GO:0030030">
    <property type="term" value="P:cell projection organization"/>
    <property type="evidence" value="ECO:0007669"/>
    <property type="project" value="UniProtKB-KW"/>
</dbReference>
<dbReference type="GO" id="GO:0014032">
    <property type="term" value="P:neural crest cell development"/>
    <property type="evidence" value="ECO:0000250"/>
    <property type="project" value="UniProtKB"/>
</dbReference>
<dbReference type="GO" id="GO:0001503">
    <property type="term" value="P:ossification"/>
    <property type="evidence" value="ECO:0007669"/>
    <property type="project" value="UniProtKB-KW"/>
</dbReference>
<dbReference type="GO" id="GO:1903012">
    <property type="term" value="P:positive regulation of bone development"/>
    <property type="evidence" value="ECO:0000250"/>
    <property type="project" value="UniProtKB"/>
</dbReference>
<dbReference type="GO" id="GO:0061036">
    <property type="term" value="P:positive regulation of cartilage development"/>
    <property type="evidence" value="ECO:0000250"/>
    <property type="project" value="UniProtKB"/>
</dbReference>
<dbReference type="GO" id="GO:0045724">
    <property type="term" value="P:positive regulation of cilium assembly"/>
    <property type="evidence" value="ECO:0000250"/>
    <property type="project" value="UniProtKB"/>
</dbReference>
<dbReference type="InterPro" id="IPR008010">
    <property type="entry name" value="Tatp1"/>
</dbReference>
<dbReference type="PANTHER" id="PTHR13317">
    <property type="entry name" value="TRANSMEMBRANE ANTERIOR POSTERIOR TRANSFORMATION PROTEIN 1 HOMOLOG"/>
    <property type="match status" value="1"/>
</dbReference>
<dbReference type="PANTHER" id="PTHR13317:SF4">
    <property type="entry name" value="TRANSMEMBRANE ANTERIOR POSTERIOR TRANSFORMATION PROTEIN 1 HOMOLOG"/>
    <property type="match status" value="1"/>
</dbReference>
<dbReference type="Pfam" id="PF05346">
    <property type="entry name" value="DUF747"/>
    <property type="match status" value="1"/>
</dbReference>
<gene>
    <name type="primary">tapt1</name>
</gene>
<evidence type="ECO:0000250" key="1">
    <source>
        <dbReference type="UniProtKB" id="A2BIE7"/>
    </source>
</evidence>
<evidence type="ECO:0000250" key="2">
    <source>
        <dbReference type="UniProtKB" id="Q4VBD2"/>
    </source>
</evidence>
<evidence type="ECO:0000250" key="3">
    <source>
        <dbReference type="UniProtKB" id="Q6NXT6"/>
    </source>
</evidence>
<evidence type="ECO:0000255" key="4"/>
<evidence type="ECO:0000256" key="5">
    <source>
        <dbReference type="SAM" id="MobiDB-lite"/>
    </source>
</evidence>
<evidence type="ECO:0000305" key="6"/>
<accession>Q5EAY8</accession>
<organism>
    <name type="scientific">Xenopus laevis</name>
    <name type="common">African clawed frog</name>
    <dbReference type="NCBI Taxonomy" id="8355"/>
    <lineage>
        <taxon>Eukaryota</taxon>
        <taxon>Metazoa</taxon>
        <taxon>Chordata</taxon>
        <taxon>Craniata</taxon>
        <taxon>Vertebrata</taxon>
        <taxon>Euteleostomi</taxon>
        <taxon>Amphibia</taxon>
        <taxon>Batrachia</taxon>
        <taxon>Anura</taxon>
        <taxon>Pipoidea</taxon>
        <taxon>Pipidae</taxon>
        <taxon>Xenopodinae</taxon>
        <taxon>Xenopus</taxon>
        <taxon>Xenopus</taxon>
    </lineage>
</organism>
<keyword id="KW-0966">Cell projection</keyword>
<keyword id="KW-0891">Chondrogenesis</keyword>
<keyword id="KW-0969">Cilium</keyword>
<keyword id="KW-0970">Cilium biogenesis/degradation</keyword>
<keyword id="KW-0963">Cytoplasm</keyword>
<keyword id="KW-0206">Cytoskeleton</keyword>
<keyword id="KW-0217">Developmental protein</keyword>
<keyword id="KW-0221">Differentiation</keyword>
<keyword id="KW-0472">Membrane</keyword>
<keyword id="KW-0892">Osteogenesis</keyword>
<keyword id="KW-1185">Reference proteome</keyword>
<keyword id="KW-0812">Transmembrane</keyword>
<keyword id="KW-1133">Transmembrane helix</keyword>
<comment type="function">
    <text evidence="1 2">Plays a role in primary cilia formation. Involved in cartilage and bone development. May play a role in the differentiation of cranial neural crest cells. May act as a downstream effector of hoxc8 during development.</text>
</comment>
<comment type="subcellular location">
    <subcellularLocation>
        <location evidence="3">Cytoplasm</location>
        <location evidence="3">Cytoskeleton</location>
        <location evidence="3">Microtubule organizing center</location>
        <location evidence="3">Centrosome</location>
    </subcellularLocation>
    <subcellularLocation>
        <location evidence="3">Cytoplasm</location>
        <location evidence="3">Cytoskeleton</location>
        <location evidence="3">Cilium basal body</location>
    </subcellularLocation>
    <subcellularLocation>
        <location evidence="3">Membrane</location>
        <topology evidence="3">Multi-pass membrane protein</topology>
    </subcellularLocation>
</comment>
<comment type="similarity">
    <text evidence="6">Belongs to the TAPT1 family.</text>
</comment>